<feature type="chain" id="PRO_0000312934" description="Serine/threonine-protein kinase ssn3">
    <location>
        <begin position="1"/>
        <end position="426"/>
    </location>
</feature>
<feature type="domain" description="Protein kinase" evidence="2">
    <location>
        <begin position="41"/>
        <end position="368"/>
    </location>
</feature>
<feature type="region of interest" description="Disordered" evidence="4">
    <location>
        <begin position="390"/>
        <end position="426"/>
    </location>
</feature>
<feature type="active site" description="Proton acceptor" evidence="2 3">
    <location>
        <position position="173"/>
    </location>
</feature>
<feature type="binding site" evidence="2">
    <location>
        <begin position="47"/>
        <end position="55"/>
    </location>
    <ligand>
        <name>ATP</name>
        <dbReference type="ChEBI" id="CHEBI:30616"/>
    </ligand>
</feature>
<feature type="binding site" evidence="2">
    <location>
        <position position="71"/>
    </location>
    <ligand>
        <name>ATP</name>
        <dbReference type="ChEBI" id="CHEBI:30616"/>
    </ligand>
</feature>
<protein>
    <recommendedName>
        <fullName>Serine/threonine-protein kinase ssn3</fullName>
        <ecNumber>2.7.11.22</ecNumber>
        <ecNumber>2.7.11.23</ecNumber>
    </recommendedName>
    <alternativeName>
        <fullName>Cyclin-dependent kinase 8</fullName>
    </alternativeName>
</protein>
<dbReference type="EC" id="2.7.11.22"/>
<dbReference type="EC" id="2.7.11.23"/>
<dbReference type="EMBL" id="AAHF01000002">
    <property type="protein sequence ID" value="EAL92187.1"/>
    <property type="status" value="ALT_SEQ"/>
    <property type="molecule type" value="Genomic_DNA"/>
</dbReference>
<dbReference type="RefSeq" id="XP_754225.1">
    <property type="nucleotide sequence ID" value="XM_749132.1"/>
</dbReference>
<dbReference type="SMR" id="Q4WYR6"/>
<dbReference type="FunCoup" id="Q4WYR6">
    <property type="interactions" value="1046"/>
</dbReference>
<dbReference type="STRING" id="330879.Q4WYR6"/>
<dbReference type="GeneID" id="3512242"/>
<dbReference type="KEGG" id="afm:AFUA_3G13990"/>
<dbReference type="eggNOG" id="KOG0666">
    <property type="taxonomic scope" value="Eukaryota"/>
</dbReference>
<dbReference type="HOGENOM" id="CLU_000288_181_6_1"/>
<dbReference type="InParanoid" id="Q4WYR6"/>
<dbReference type="OrthoDB" id="6284126at2759"/>
<dbReference type="Proteomes" id="UP000002530">
    <property type="component" value="Chromosome 3"/>
</dbReference>
<dbReference type="GO" id="GO:0016592">
    <property type="term" value="C:mediator complex"/>
    <property type="evidence" value="ECO:0000318"/>
    <property type="project" value="GO_Central"/>
</dbReference>
<dbReference type="GO" id="GO:0005634">
    <property type="term" value="C:nucleus"/>
    <property type="evidence" value="ECO:0000318"/>
    <property type="project" value="GO_Central"/>
</dbReference>
<dbReference type="GO" id="GO:0005524">
    <property type="term" value="F:ATP binding"/>
    <property type="evidence" value="ECO:0007669"/>
    <property type="project" value="UniProtKB-KW"/>
</dbReference>
<dbReference type="GO" id="GO:0004693">
    <property type="term" value="F:cyclin-dependent protein serine/threonine kinase activity"/>
    <property type="evidence" value="ECO:0000318"/>
    <property type="project" value="GO_Central"/>
</dbReference>
<dbReference type="GO" id="GO:0046872">
    <property type="term" value="F:metal ion binding"/>
    <property type="evidence" value="ECO:0007669"/>
    <property type="project" value="UniProtKB-KW"/>
</dbReference>
<dbReference type="GO" id="GO:0106310">
    <property type="term" value="F:protein serine kinase activity"/>
    <property type="evidence" value="ECO:0007669"/>
    <property type="project" value="RHEA"/>
</dbReference>
<dbReference type="GO" id="GO:0008353">
    <property type="term" value="F:RNA polymerase II CTD heptapeptide repeat kinase activity"/>
    <property type="evidence" value="ECO:0007669"/>
    <property type="project" value="UniProtKB-EC"/>
</dbReference>
<dbReference type="CDD" id="cd07842">
    <property type="entry name" value="STKc_CDK8_like"/>
    <property type="match status" value="1"/>
</dbReference>
<dbReference type="FunFam" id="1.10.510.10:FF:000408">
    <property type="entry name" value="Serine/threonine-protein kinase SSN3"/>
    <property type="match status" value="1"/>
</dbReference>
<dbReference type="FunFam" id="3.30.200.20:FF:000426">
    <property type="entry name" value="Serine/threonine-protein kinase ssn3"/>
    <property type="match status" value="1"/>
</dbReference>
<dbReference type="Gene3D" id="3.30.200.20">
    <property type="entry name" value="Phosphorylase Kinase, domain 1"/>
    <property type="match status" value="1"/>
</dbReference>
<dbReference type="Gene3D" id="1.10.510.10">
    <property type="entry name" value="Transferase(Phosphotransferase) domain 1"/>
    <property type="match status" value="1"/>
</dbReference>
<dbReference type="InterPro" id="IPR050108">
    <property type="entry name" value="CDK"/>
</dbReference>
<dbReference type="InterPro" id="IPR011009">
    <property type="entry name" value="Kinase-like_dom_sf"/>
</dbReference>
<dbReference type="InterPro" id="IPR000719">
    <property type="entry name" value="Prot_kinase_dom"/>
</dbReference>
<dbReference type="InterPro" id="IPR008271">
    <property type="entry name" value="Ser/Thr_kinase_AS"/>
</dbReference>
<dbReference type="PANTHER" id="PTHR24056">
    <property type="entry name" value="CELL DIVISION PROTEIN KINASE"/>
    <property type="match status" value="1"/>
</dbReference>
<dbReference type="PANTHER" id="PTHR24056:SF495">
    <property type="entry name" value="CYCLIN-DEPENDENT KINASE 8-RELATED"/>
    <property type="match status" value="1"/>
</dbReference>
<dbReference type="Pfam" id="PF00069">
    <property type="entry name" value="Pkinase"/>
    <property type="match status" value="1"/>
</dbReference>
<dbReference type="SMART" id="SM00220">
    <property type="entry name" value="S_TKc"/>
    <property type="match status" value="1"/>
</dbReference>
<dbReference type="SUPFAM" id="SSF56112">
    <property type="entry name" value="Protein kinase-like (PK-like)"/>
    <property type="match status" value="1"/>
</dbReference>
<dbReference type="PROSITE" id="PS50011">
    <property type="entry name" value="PROTEIN_KINASE_DOM"/>
    <property type="match status" value="1"/>
</dbReference>
<dbReference type="PROSITE" id="PS00108">
    <property type="entry name" value="PROTEIN_KINASE_ST"/>
    <property type="match status" value="1"/>
</dbReference>
<evidence type="ECO:0000250" key="1"/>
<evidence type="ECO:0000255" key="2">
    <source>
        <dbReference type="PROSITE-ProRule" id="PRU00159"/>
    </source>
</evidence>
<evidence type="ECO:0000255" key="3">
    <source>
        <dbReference type="PROSITE-ProRule" id="PRU10027"/>
    </source>
</evidence>
<evidence type="ECO:0000256" key="4">
    <source>
        <dbReference type="SAM" id="MobiDB-lite"/>
    </source>
</evidence>
<evidence type="ECO:0000305" key="5"/>
<sequence>MFGRNFPFFNSIGGFYPRESLDSKRPSGSGYTSKVRVRDKYHIVGFISSGTYGRVYKAIGKDGRKGEYAIKKFKPDKEGEIIQYTGLSQSAIREMALCSELDHPNVVQLAEIILEDKCIFMVFEYTEHDLLQIIHHHTQPQRHAIPAPMIKSILFQLLNGLLYLHTNWVLHRDLKPANILVTSSGAVRIGDLGLARLFYKPLNSLYSGDKVVVTIWYRAPELLMGSRHYTPAVDLWAVGCIFAELLSLRPIFKGEEAKMDSKKTVPFQRNQMMKIIDIMGLPRKETWPGLVSMPEFSQLQSLAMSRGYINRQCNLEGWYQSCLKNNGYSPGSAAGTPGAEGFDLLSRLLEYDPTKRISAREALEHPYFTTGTPVTANCFAGYEGKYPHRRVTQDDNDIRSGSLPGTKRSGLPDDSLMGRAAKRLKE</sequence>
<gene>
    <name type="primary">ssn3</name>
    <name type="synonym">cdk8</name>
    <name type="ORF">AFUA_3G13990</name>
</gene>
<reference key="1">
    <citation type="journal article" date="2005" name="Nature">
        <title>Genomic sequence of the pathogenic and allergenic filamentous fungus Aspergillus fumigatus.</title>
        <authorList>
            <person name="Nierman W.C."/>
            <person name="Pain A."/>
            <person name="Anderson M.J."/>
            <person name="Wortman J.R."/>
            <person name="Kim H.S."/>
            <person name="Arroyo J."/>
            <person name="Berriman M."/>
            <person name="Abe K."/>
            <person name="Archer D.B."/>
            <person name="Bermejo C."/>
            <person name="Bennett J.W."/>
            <person name="Bowyer P."/>
            <person name="Chen D."/>
            <person name="Collins M."/>
            <person name="Coulsen R."/>
            <person name="Davies R."/>
            <person name="Dyer P.S."/>
            <person name="Farman M.L."/>
            <person name="Fedorova N."/>
            <person name="Fedorova N.D."/>
            <person name="Feldblyum T.V."/>
            <person name="Fischer R."/>
            <person name="Fosker N."/>
            <person name="Fraser A."/>
            <person name="Garcia J.L."/>
            <person name="Garcia M.J."/>
            <person name="Goble A."/>
            <person name="Goldman G.H."/>
            <person name="Gomi K."/>
            <person name="Griffith-Jones S."/>
            <person name="Gwilliam R."/>
            <person name="Haas B.J."/>
            <person name="Haas H."/>
            <person name="Harris D.E."/>
            <person name="Horiuchi H."/>
            <person name="Huang J."/>
            <person name="Humphray S."/>
            <person name="Jimenez J."/>
            <person name="Keller N."/>
            <person name="Khouri H."/>
            <person name="Kitamoto K."/>
            <person name="Kobayashi T."/>
            <person name="Konzack S."/>
            <person name="Kulkarni R."/>
            <person name="Kumagai T."/>
            <person name="Lafton A."/>
            <person name="Latge J.-P."/>
            <person name="Li W."/>
            <person name="Lord A."/>
            <person name="Lu C."/>
            <person name="Majoros W.H."/>
            <person name="May G.S."/>
            <person name="Miller B.L."/>
            <person name="Mohamoud Y."/>
            <person name="Molina M."/>
            <person name="Monod M."/>
            <person name="Mouyna I."/>
            <person name="Mulligan S."/>
            <person name="Murphy L.D."/>
            <person name="O'Neil S."/>
            <person name="Paulsen I."/>
            <person name="Penalva M.A."/>
            <person name="Pertea M."/>
            <person name="Price C."/>
            <person name="Pritchard B.L."/>
            <person name="Quail M.A."/>
            <person name="Rabbinowitsch E."/>
            <person name="Rawlins N."/>
            <person name="Rajandream M.A."/>
            <person name="Reichard U."/>
            <person name="Renauld H."/>
            <person name="Robson G.D."/>
            <person name="Rodriguez de Cordoba S."/>
            <person name="Rodriguez-Pena J.M."/>
            <person name="Ronning C.M."/>
            <person name="Rutter S."/>
            <person name="Salzberg S.L."/>
            <person name="Sanchez M."/>
            <person name="Sanchez-Ferrero J.C."/>
            <person name="Saunders D."/>
            <person name="Seeger K."/>
            <person name="Squares R."/>
            <person name="Squares S."/>
            <person name="Takeuchi M."/>
            <person name="Tekaia F."/>
            <person name="Turner G."/>
            <person name="Vazquez de Aldana C.R."/>
            <person name="Weidman J."/>
            <person name="White O."/>
            <person name="Woodward J.R."/>
            <person name="Yu J.-H."/>
            <person name="Fraser C.M."/>
            <person name="Galagan J.E."/>
            <person name="Asai K."/>
            <person name="Machida M."/>
            <person name="Hall N."/>
            <person name="Barrell B.G."/>
            <person name="Denning D.W."/>
        </authorList>
    </citation>
    <scope>NUCLEOTIDE SEQUENCE [LARGE SCALE GENOMIC DNA]</scope>
    <source>
        <strain>ATCC MYA-4609 / CBS 101355 / FGSC A1100 / Af293</strain>
    </source>
</reference>
<keyword id="KW-0010">Activator</keyword>
<keyword id="KW-0067">ATP-binding</keyword>
<keyword id="KW-0418">Kinase</keyword>
<keyword id="KW-0460">Magnesium</keyword>
<keyword id="KW-0479">Metal-binding</keyword>
<keyword id="KW-0547">Nucleotide-binding</keyword>
<keyword id="KW-0539">Nucleus</keyword>
<keyword id="KW-1185">Reference proteome</keyword>
<keyword id="KW-0678">Repressor</keyword>
<keyword id="KW-0723">Serine/threonine-protein kinase</keyword>
<keyword id="KW-0804">Transcription</keyword>
<keyword id="KW-0805">Transcription regulation</keyword>
<keyword id="KW-0808">Transferase</keyword>
<comment type="function">
    <text evidence="1">Component of the srb8-11 complex. The srb8-11 complex is a regulatory module of the Mediator complex which is itself involved in regulation of basal and activated RNA polymerase II-dependent transcription. The srb8-11 complex may be involved in the transcriptional repression of a subset of genes regulated by Mediator. It may inhibit the association of the Mediator complex with RNA polymerase II to form the holoenzyme complex. The srb8-11 complex phosphorylates the C-terminal domain (CTD) of the largest subunit of RNA polymerase II (By similarity).</text>
</comment>
<comment type="catalytic activity">
    <reaction>
        <text>L-seryl-[protein] + ATP = O-phospho-L-seryl-[protein] + ADP + H(+)</text>
        <dbReference type="Rhea" id="RHEA:17989"/>
        <dbReference type="Rhea" id="RHEA-COMP:9863"/>
        <dbReference type="Rhea" id="RHEA-COMP:11604"/>
        <dbReference type="ChEBI" id="CHEBI:15378"/>
        <dbReference type="ChEBI" id="CHEBI:29999"/>
        <dbReference type="ChEBI" id="CHEBI:30616"/>
        <dbReference type="ChEBI" id="CHEBI:83421"/>
        <dbReference type="ChEBI" id="CHEBI:456216"/>
        <dbReference type="EC" id="2.7.11.22"/>
    </reaction>
</comment>
<comment type="catalytic activity">
    <reaction>
        <text>L-threonyl-[protein] + ATP = O-phospho-L-threonyl-[protein] + ADP + H(+)</text>
        <dbReference type="Rhea" id="RHEA:46608"/>
        <dbReference type="Rhea" id="RHEA-COMP:11060"/>
        <dbReference type="Rhea" id="RHEA-COMP:11605"/>
        <dbReference type="ChEBI" id="CHEBI:15378"/>
        <dbReference type="ChEBI" id="CHEBI:30013"/>
        <dbReference type="ChEBI" id="CHEBI:30616"/>
        <dbReference type="ChEBI" id="CHEBI:61977"/>
        <dbReference type="ChEBI" id="CHEBI:456216"/>
        <dbReference type="EC" id="2.7.11.22"/>
    </reaction>
</comment>
<comment type="catalytic activity">
    <reaction>
        <text>[DNA-directed RNA polymerase] + ATP = phospho-[DNA-directed RNA polymerase] + ADP + H(+)</text>
        <dbReference type="Rhea" id="RHEA:10216"/>
        <dbReference type="Rhea" id="RHEA-COMP:11321"/>
        <dbReference type="Rhea" id="RHEA-COMP:11322"/>
        <dbReference type="ChEBI" id="CHEBI:15378"/>
        <dbReference type="ChEBI" id="CHEBI:30616"/>
        <dbReference type="ChEBI" id="CHEBI:43176"/>
        <dbReference type="ChEBI" id="CHEBI:68546"/>
        <dbReference type="ChEBI" id="CHEBI:456216"/>
        <dbReference type="EC" id="2.7.11.23"/>
    </reaction>
</comment>
<comment type="cofactor">
    <cofactor evidence="1">
        <name>Mg(2+)</name>
        <dbReference type="ChEBI" id="CHEBI:18420"/>
    </cofactor>
</comment>
<comment type="subunit">
    <text evidence="1">Component of the srb8-11 complex, a regulatory module of the Mediator complex.</text>
</comment>
<comment type="subcellular location">
    <subcellularLocation>
        <location evidence="5">Nucleus</location>
    </subcellularLocation>
</comment>
<comment type="similarity">
    <text evidence="5">Belongs to the protein kinase superfamily. CMGC Ser/Thr protein kinase family. CDC2/CDKX subfamily.</text>
</comment>
<comment type="sequence caution" evidence="5">
    <conflict type="erroneous gene model prediction">
        <sequence resource="EMBL-CDS" id="EAL92187"/>
    </conflict>
</comment>
<name>SSN3_ASPFU</name>
<accession>Q4WYR6</accession>
<organism>
    <name type="scientific">Aspergillus fumigatus (strain ATCC MYA-4609 / CBS 101355 / FGSC A1100 / Af293)</name>
    <name type="common">Neosartorya fumigata</name>
    <dbReference type="NCBI Taxonomy" id="330879"/>
    <lineage>
        <taxon>Eukaryota</taxon>
        <taxon>Fungi</taxon>
        <taxon>Dikarya</taxon>
        <taxon>Ascomycota</taxon>
        <taxon>Pezizomycotina</taxon>
        <taxon>Eurotiomycetes</taxon>
        <taxon>Eurotiomycetidae</taxon>
        <taxon>Eurotiales</taxon>
        <taxon>Aspergillaceae</taxon>
        <taxon>Aspergillus</taxon>
        <taxon>Aspergillus subgen. Fumigati</taxon>
    </lineage>
</organism>
<proteinExistence type="inferred from homology"/>